<name>RL331_MYCTA</name>
<organism>
    <name type="scientific">Mycobacterium tuberculosis (strain ATCC 25177 / H37Ra)</name>
    <dbReference type="NCBI Taxonomy" id="419947"/>
    <lineage>
        <taxon>Bacteria</taxon>
        <taxon>Bacillati</taxon>
        <taxon>Actinomycetota</taxon>
        <taxon>Actinomycetes</taxon>
        <taxon>Mycobacteriales</taxon>
        <taxon>Mycobacteriaceae</taxon>
        <taxon>Mycobacterium</taxon>
        <taxon>Mycobacterium tuberculosis complex</taxon>
    </lineage>
</organism>
<keyword id="KW-0002">3D-structure</keyword>
<keyword id="KW-1185">Reference proteome</keyword>
<keyword id="KW-0687">Ribonucleoprotein</keyword>
<keyword id="KW-0689">Ribosomal protein</keyword>
<evidence type="ECO:0000255" key="1">
    <source>
        <dbReference type="HAMAP-Rule" id="MF_00294"/>
    </source>
</evidence>
<evidence type="ECO:0007829" key="2">
    <source>
        <dbReference type="PDB" id="7F0D"/>
    </source>
</evidence>
<feature type="chain" id="PRO_0000356564" description="Large ribosomal subunit protein bL33A">
    <location>
        <begin position="1"/>
        <end position="55"/>
    </location>
</feature>
<feature type="turn" evidence="2">
    <location>
        <begin position="16"/>
        <end position="19"/>
    </location>
</feature>
<feature type="strand" evidence="2">
    <location>
        <begin position="29"/>
        <end position="31"/>
    </location>
</feature>
<feature type="turn" evidence="2">
    <location>
        <begin position="43"/>
        <end position="46"/>
    </location>
</feature>
<reference key="1">
    <citation type="journal article" date="2008" name="PLoS ONE">
        <title>Genetic basis of virulence attenuation revealed by comparative genomic analysis of Mycobacterium tuberculosis strain H37Ra versus H37Rv.</title>
        <authorList>
            <person name="Zheng H."/>
            <person name="Lu L."/>
            <person name="Wang B."/>
            <person name="Pu S."/>
            <person name="Zhang X."/>
            <person name="Zhu G."/>
            <person name="Shi W."/>
            <person name="Zhang L."/>
            <person name="Wang H."/>
            <person name="Wang S."/>
            <person name="Zhao G."/>
            <person name="Zhang Y."/>
        </authorList>
    </citation>
    <scope>NUCLEOTIDE SEQUENCE [LARGE SCALE GENOMIC DNA]</scope>
    <source>
        <strain>ATCC 25177 / H37Ra</strain>
    </source>
</reference>
<sequence length="55" mass="6496">MASSTDVRPKITLACEVCKHRNYITKKNRRNDPDRLELKKFCPNCGKHQAHRETR</sequence>
<dbReference type="EMBL" id="CP000611">
    <property type="protein sequence ID" value="ABQ72369.1"/>
    <property type="molecule type" value="Genomic_DNA"/>
</dbReference>
<dbReference type="PDB" id="7F0D">
    <property type="method" value="EM"/>
    <property type="resolution" value="3.30 A"/>
    <property type="chains" value="1=1-55"/>
</dbReference>
<dbReference type="PDBsum" id="7F0D"/>
<dbReference type="SMR" id="A5U019"/>
<dbReference type="KEGG" id="mra:MRA_0645"/>
<dbReference type="eggNOG" id="COG0267">
    <property type="taxonomic scope" value="Bacteria"/>
</dbReference>
<dbReference type="HOGENOM" id="CLU_190949_0_2_11"/>
<dbReference type="Proteomes" id="UP000001988">
    <property type="component" value="Chromosome"/>
</dbReference>
<dbReference type="GO" id="GO:0005737">
    <property type="term" value="C:cytoplasm"/>
    <property type="evidence" value="ECO:0007669"/>
    <property type="project" value="UniProtKB-ARBA"/>
</dbReference>
<dbReference type="GO" id="GO:1990904">
    <property type="term" value="C:ribonucleoprotein complex"/>
    <property type="evidence" value="ECO:0007669"/>
    <property type="project" value="UniProtKB-KW"/>
</dbReference>
<dbReference type="GO" id="GO:0005840">
    <property type="term" value="C:ribosome"/>
    <property type="evidence" value="ECO:0007669"/>
    <property type="project" value="UniProtKB-KW"/>
</dbReference>
<dbReference type="GO" id="GO:0003735">
    <property type="term" value="F:structural constituent of ribosome"/>
    <property type="evidence" value="ECO:0007669"/>
    <property type="project" value="InterPro"/>
</dbReference>
<dbReference type="GO" id="GO:0006412">
    <property type="term" value="P:translation"/>
    <property type="evidence" value="ECO:0007669"/>
    <property type="project" value="UniProtKB-UniRule"/>
</dbReference>
<dbReference type="Gene3D" id="2.20.28.120">
    <property type="entry name" value="Ribosomal protein L33"/>
    <property type="match status" value="1"/>
</dbReference>
<dbReference type="HAMAP" id="MF_00294">
    <property type="entry name" value="Ribosomal_bL33"/>
    <property type="match status" value="1"/>
</dbReference>
<dbReference type="InterPro" id="IPR001705">
    <property type="entry name" value="Ribosomal_bL33"/>
</dbReference>
<dbReference type="InterPro" id="IPR018264">
    <property type="entry name" value="Ribosomal_bL33_CS"/>
</dbReference>
<dbReference type="InterPro" id="IPR038584">
    <property type="entry name" value="Ribosomal_bL33_sf"/>
</dbReference>
<dbReference type="InterPro" id="IPR011332">
    <property type="entry name" value="Ribosomal_zn-bd"/>
</dbReference>
<dbReference type="NCBIfam" id="NF001764">
    <property type="entry name" value="PRK00504.1"/>
    <property type="match status" value="1"/>
</dbReference>
<dbReference type="NCBIfam" id="NF001860">
    <property type="entry name" value="PRK00595.1"/>
    <property type="match status" value="1"/>
</dbReference>
<dbReference type="NCBIfam" id="TIGR01023">
    <property type="entry name" value="rpmG_bact"/>
    <property type="match status" value="1"/>
</dbReference>
<dbReference type="PANTHER" id="PTHR43168">
    <property type="entry name" value="50S RIBOSOMAL PROTEIN L33, CHLOROPLASTIC"/>
    <property type="match status" value="1"/>
</dbReference>
<dbReference type="PANTHER" id="PTHR43168:SF2">
    <property type="entry name" value="LARGE RIBOSOMAL SUBUNIT PROTEIN BL33C"/>
    <property type="match status" value="1"/>
</dbReference>
<dbReference type="Pfam" id="PF00471">
    <property type="entry name" value="Ribosomal_L33"/>
    <property type="match status" value="1"/>
</dbReference>
<dbReference type="SUPFAM" id="SSF57829">
    <property type="entry name" value="Zn-binding ribosomal proteins"/>
    <property type="match status" value="1"/>
</dbReference>
<dbReference type="PROSITE" id="PS00582">
    <property type="entry name" value="RIBOSOMAL_L33"/>
    <property type="match status" value="1"/>
</dbReference>
<comment type="similarity">
    <text evidence="1">Belongs to the bacterial ribosomal protein bL33 family.</text>
</comment>
<accession>A5U019</accession>
<proteinExistence type="evidence at protein level"/>
<protein>
    <recommendedName>
        <fullName evidence="1">Large ribosomal subunit protein bL33A</fullName>
    </recommendedName>
    <alternativeName>
        <fullName evidence="1">50S ribosomal protein L33 1</fullName>
    </alternativeName>
</protein>
<gene>
    <name evidence="1" type="primary">rpmG1</name>
    <name type="ordered locus">MRA_0645</name>
</gene>